<gene>
    <name type="primary">y07E</name>
    <name type="synonym">5.1</name>
</gene>
<evidence type="ECO:0000256" key="1">
    <source>
        <dbReference type="SAM" id="MobiDB-lite"/>
    </source>
</evidence>
<sequence>MEGSSIDVTFTAQLETGETLVSINITSYEETPGVLVEENRLYGTYESVFGFGNDALKYRLGDEFKTAASWEELPTDSDTQLYLWKAPQNLQKTFTYEVTLIYDYQEQSESGGSGSNSRSSSDTTEPTDPPAPVRKTLVKNYTKTIVGNWSRWANKLRKYAYARP</sequence>
<name>Y07E_BPT4</name>
<protein>
    <recommendedName>
        <fullName>Uncharacterized 18.5 kDa protein in repEA-segC intergenic region</fullName>
    </recommendedName>
</protein>
<reference key="1">
    <citation type="journal article" date="1989" name="New Biol.">
        <title>Functional relationships and structural determinants of two bacteriophage T4 lysozymes: a soluble (gene e) and a baseplate-associated (gene 5) protein.</title>
        <authorList>
            <person name="Mosig G."/>
            <person name="Lin G.W."/>
            <person name="Franklin J."/>
            <person name="Fan W.H."/>
        </authorList>
    </citation>
    <scope>NUCLEOTIDE SEQUENCE [GENOMIC DNA]</scope>
</reference>
<reference key="2">
    <citation type="journal article" date="2003" name="Microbiol. Mol. Biol. Rev.">
        <title>Bacteriophage T4 genome.</title>
        <authorList>
            <person name="Miller E.S."/>
            <person name="Kutter E."/>
            <person name="Mosig G."/>
            <person name="Arisaka F."/>
            <person name="Kunisawa T."/>
            <person name="Ruger W."/>
        </authorList>
    </citation>
    <scope>NUCLEOTIDE SEQUENCE [LARGE SCALE GENOMIC DNA]</scope>
</reference>
<proteinExistence type="predicted"/>
<dbReference type="EMBL" id="X15728">
    <property type="status" value="NOT_ANNOTATED_CDS"/>
    <property type="molecule type" value="Genomic_DNA"/>
</dbReference>
<dbReference type="EMBL" id="AF158101">
    <property type="protein sequence ID" value="AAD42483.1"/>
    <property type="molecule type" value="Genomic_DNA"/>
</dbReference>
<dbReference type="RefSeq" id="NP_049760.1">
    <property type="nucleotide sequence ID" value="NC_000866.4"/>
</dbReference>
<dbReference type="GeneID" id="1258586"/>
<dbReference type="KEGG" id="vg:1258586"/>
<dbReference type="OrthoDB" id="14738at10239"/>
<dbReference type="Proteomes" id="UP000009087">
    <property type="component" value="Segment"/>
</dbReference>
<organismHost>
    <name type="scientific">Escherichia coli</name>
    <dbReference type="NCBI Taxonomy" id="562"/>
</organismHost>
<keyword id="KW-1185">Reference proteome</keyword>
<accession>P39491</accession>
<accession>P16008</accession>
<feature type="chain" id="PRO_0000165154" description="Uncharacterized 18.5 kDa protein in repEA-segC intergenic region">
    <location>
        <begin position="1"/>
        <end position="164"/>
    </location>
</feature>
<feature type="region of interest" description="Disordered" evidence="1">
    <location>
        <begin position="107"/>
        <end position="136"/>
    </location>
</feature>
<organism>
    <name type="scientific">Enterobacteria phage T4</name>
    <name type="common">Bacteriophage T4</name>
    <dbReference type="NCBI Taxonomy" id="10665"/>
    <lineage>
        <taxon>Viruses</taxon>
        <taxon>Duplodnaviria</taxon>
        <taxon>Heunggongvirae</taxon>
        <taxon>Uroviricota</taxon>
        <taxon>Caudoviricetes</taxon>
        <taxon>Straboviridae</taxon>
        <taxon>Tevenvirinae</taxon>
        <taxon>Tequatrovirus</taxon>
    </lineage>
</organism>